<name>TCPZ_RABIT</name>
<accession>O77622</accession>
<reference key="1">
    <citation type="journal article" date="2000" name="Exp. Nephrol.">
        <title>Cloning of rabbit Cct6 and the distribution of the Cct complex in mammalian tissues.</title>
        <authorList>
            <person name="Schwartz G.J."/>
            <person name="Kittelberger A.M."/>
            <person name="Segel G.B."/>
        </authorList>
    </citation>
    <scope>NUCLEOTIDE SEQUENCE [MRNA]</scope>
    <source>
        <strain>New Zealand</strain>
    </source>
</reference>
<protein>
    <recommendedName>
        <fullName>T-complex protein 1 subunit zeta</fullName>
        <shortName>TCP-1-zeta</shortName>
        <ecNumber evidence="1">3.6.1.-</ecNumber>
    </recommendedName>
    <alternativeName>
        <fullName>CCT-zeta</fullName>
    </alternativeName>
</protein>
<proteinExistence type="evidence at protein level"/>
<gene>
    <name type="primary">CCT6</name>
</gene>
<feature type="initiator methionine" description="Removed" evidence="1">
    <location>
        <position position="1"/>
    </location>
</feature>
<feature type="chain" id="PRO_0000128359" description="T-complex protein 1 subunit zeta">
    <location>
        <begin position="2"/>
        <end position="531"/>
    </location>
</feature>
<feature type="binding site" evidence="1">
    <location>
        <position position="39"/>
    </location>
    <ligand>
        <name>ADP</name>
        <dbReference type="ChEBI" id="CHEBI:456216"/>
    </ligand>
</feature>
<feature type="binding site" evidence="1">
    <location>
        <position position="39"/>
    </location>
    <ligand>
        <name>ATP</name>
        <dbReference type="ChEBI" id="CHEBI:30616"/>
    </ligand>
</feature>
<feature type="binding site" evidence="1">
    <location>
        <position position="90"/>
    </location>
    <ligand>
        <name>Mg(2+)</name>
        <dbReference type="ChEBI" id="CHEBI:18420"/>
    </ligand>
</feature>
<feature type="binding site" evidence="1">
    <location>
        <position position="91"/>
    </location>
    <ligand>
        <name>ADP</name>
        <dbReference type="ChEBI" id="CHEBI:456216"/>
    </ligand>
</feature>
<feature type="binding site" evidence="1">
    <location>
        <position position="91"/>
    </location>
    <ligand>
        <name>ATP</name>
        <dbReference type="ChEBI" id="CHEBI:30616"/>
    </ligand>
</feature>
<feature type="binding site" evidence="1">
    <location>
        <position position="92"/>
    </location>
    <ligand>
        <name>ADP</name>
        <dbReference type="ChEBI" id="CHEBI:456216"/>
    </ligand>
</feature>
<feature type="binding site" evidence="1">
    <location>
        <position position="92"/>
    </location>
    <ligand>
        <name>ATP</name>
        <dbReference type="ChEBI" id="CHEBI:30616"/>
    </ligand>
</feature>
<feature type="binding site" evidence="1">
    <location>
        <position position="93"/>
    </location>
    <ligand>
        <name>ADP</name>
        <dbReference type="ChEBI" id="CHEBI:456216"/>
    </ligand>
</feature>
<feature type="binding site" evidence="1">
    <location>
        <position position="93"/>
    </location>
    <ligand>
        <name>ATP</name>
        <dbReference type="ChEBI" id="CHEBI:30616"/>
    </ligand>
</feature>
<feature type="binding site" evidence="1">
    <location>
        <position position="94"/>
    </location>
    <ligand>
        <name>ADP</name>
        <dbReference type="ChEBI" id="CHEBI:456216"/>
    </ligand>
</feature>
<feature type="binding site" evidence="1">
    <location>
        <position position="158"/>
    </location>
    <ligand>
        <name>ADP</name>
        <dbReference type="ChEBI" id="CHEBI:456216"/>
    </ligand>
</feature>
<feature type="binding site" evidence="1">
    <location>
        <position position="159"/>
    </location>
    <ligand>
        <name>ADP</name>
        <dbReference type="ChEBI" id="CHEBI:456216"/>
    </ligand>
</feature>
<feature type="binding site" evidence="1">
    <location>
        <position position="411"/>
    </location>
    <ligand>
        <name>ADP</name>
        <dbReference type="ChEBI" id="CHEBI:456216"/>
    </ligand>
</feature>
<feature type="binding site" evidence="1">
    <location>
        <position position="411"/>
    </location>
    <ligand>
        <name>ATP</name>
        <dbReference type="ChEBI" id="CHEBI:30616"/>
    </ligand>
</feature>
<feature type="binding site" evidence="1">
    <location>
        <position position="412"/>
    </location>
    <ligand>
        <name>ATP</name>
        <dbReference type="ChEBI" id="CHEBI:30616"/>
    </ligand>
</feature>
<feature type="binding site" evidence="1">
    <location>
        <position position="496"/>
    </location>
    <ligand>
        <name>ADP</name>
        <dbReference type="ChEBI" id="CHEBI:456216"/>
    </ligand>
</feature>
<feature type="binding site" evidence="1">
    <location>
        <position position="496"/>
    </location>
    <ligand>
        <name>ATP</name>
        <dbReference type="ChEBI" id="CHEBI:30616"/>
    </ligand>
</feature>
<feature type="binding site" evidence="1">
    <location>
        <position position="501"/>
    </location>
    <ligand>
        <name>ATP</name>
        <dbReference type="ChEBI" id="CHEBI:30616"/>
    </ligand>
</feature>
<feature type="modified residue" description="N-acetylalanine" evidence="1">
    <location>
        <position position="2"/>
    </location>
</feature>
<feature type="modified residue" description="N6-acetyllysine" evidence="2">
    <location>
        <position position="5"/>
    </location>
</feature>
<feature type="modified residue" description="N6-acetyllysine" evidence="1">
    <location>
        <position position="199"/>
    </location>
</feature>
<feature type="modified residue" description="Phosphoserine" evidence="1">
    <location>
        <position position="205"/>
    </location>
</feature>
<feature type="modified residue" description="N6-acetyllysine" evidence="2">
    <location>
        <position position="287"/>
    </location>
</feature>
<feature type="modified residue" description="N6-acetyllysine" evidence="1">
    <location>
        <position position="365"/>
    </location>
</feature>
<feature type="modified residue" description="N6-acetyllysine" evidence="1">
    <location>
        <position position="377"/>
    </location>
</feature>
<feature type="modified residue" description="N6-acetyllysine" evidence="1">
    <location>
        <position position="388"/>
    </location>
</feature>
<feature type="cross-link" description="Glycyl lysine isopeptide (Lys-Gly) (interchain with G-Cter in SUMO2)" evidence="1">
    <location>
        <position position="251"/>
    </location>
</feature>
<evidence type="ECO:0000250" key="1">
    <source>
        <dbReference type="UniProtKB" id="P40227"/>
    </source>
</evidence>
<evidence type="ECO:0000250" key="2">
    <source>
        <dbReference type="UniProtKB" id="P80317"/>
    </source>
</evidence>
<evidence type="ECO:0000305" key="3"/>
<sequence>MAAVKTLNPKAEVARAQAALAVNISAARGLQDVLRTNLGPKGTMKMLVSGAGDIKLTKDGNVLLHEMQIQHPTASLIAKVATAQDDITGDGTTSNVLIIGELLKQADLYISEGLHPRIITEGFEAAKEKALQVLEQIKVSREMDRETLIDVARTSLRTKVHAELADVLTEAVVDSILAIKKQDEPIDLFMVEIMEMKHKSETDTSLIRGLVLDHGARHPDMKKRVEDAYILTCNVSLEYEKTEVNSGFFYKSAEEREKLVKAERKFIEDRVKKIVELKKKVCGDSDKGFVVINQKGIDPFSLDALAKEGIVALRRAKRRNMERLTLACGGVPLNSLDDLNPDCLGHAGLVYEYTLGEEKFTFIEKCNNPRSVTLLVKGPNKHTLTQIKDAIRDGLRAVKNAIDDGCVVPGAGAVEVAMAEALIKYKSSVKGRAQLGVQAFADALLIIPKVLAQNSGFDLQETLVKIRTEHSESGQLVGVDLNTGEPMVAAEVGIWDNYCVKKQLLHSCTVIATNILLVDEIMRAGMSSLKG</sequence>
<comment type="function">
    <text evidence="1">Component of the chaperonin-containing T-complex (TRiC), a molecular chaperone complex that assists the folding of actin, tubulin and other proteins upon ATP hydrolysis. The TRiC complex mediates the folding of WRAP53/TCAB1, thereby regulating telomere maintenance.</text>
</comment>
<comment type="catalytic activity">
    <reaction evidence="1">
        <text>ATP + H2O = ADP + phosphate + H(+)</text>
        <dbReference type="Rhea" id="RHEA:13065"/>
        <dbReference type="ChEBI" id="CHEBI:15377"/>
        <dbReference type="ChEBI" id="CHEBI:15378"/>
        <dbReference type="ChEBI" id="CHEBI:30616"/>
        <dbReference type="ChEBI" id="CHEBI:43474"/>
        <dbReference type="ChEBI" id="CHEBI:456216"/>
    </reaction>
</comment>
<comment type="subunit">
    <text evidence="1">Component of the chaperonin-containing T-complex (TRiC), a hexadecamer composed of two identical back-to-back stacked rings enclosing a protein folding chamber. Each ring is made up of eight different subunits: TCP1/CCT1, CCT2, CCT3, CCT4, CCT5, CCT6A/CCT6, CCT7, CCT8. Interacts with PACRG.</text>
</comment>
<comment type="interaction">
    <interactant intactId="EBI-10714431">
        <id>O77622</id>
    </interactant>
    <interactant intactId="EBI-2563542">
        <id>Q9BUR4</id>
        <label>WRAP53</label>
    </interactant>
    <organismsDiffer>true</organismsDiffer>
    <experiments>2</experiments>
</comment>
<comment type="subcellular location">
    <subcellularLocation>
        <location>Cytoplasm</location>
    </subcellularLocation>
</comment>
<comment type="similarity">
    <text evidence="3">Belongs to the TCP-1 chaperonin family.</text>
</comment>
<organism>
    <name type="scientific">Oryctolagus cuniculus</name>
    <name type="common">Rabbit</name>
    <dbReference type="NCBI Taxonomy" id="9986"/>
    <lineage>
        <taxon>Eukaryota</taxon>
        <taxon>Metazoa</taxon>
        <taxon>Chordata</taxon>
        <taxon>Craniata</taxon>
        <taxon>Vertebrata</taxon>
        <taxon>Euteleostomi</taxon>
        <taxon>Mammalia</taxon>
        <taxon>Eutheria</taxon>
        <taxon>Euarchontoglires</taxon>
        <taxon>Glires</taxon>
        <taxon>Lagomorpha</taxon>
        <taxon>Leporidae</taxon>
        <taxon>Oryctolagus</taxon>
    </lineage>
</organism>
<keyword id="KW-0007">Acetylation</keyword>
<keyword id="KW-0067">ATP-binding</keyword>
<keyword id="KW-0143">Chaperone</keyword>
<keyword id="KW-0963">Cytoplasm</keyword>
<keyword id="KW-0378">Hydrolase</keyword>
<keyword id="KW-1017">Isopeptide bond</keyword>
<keyword id="KW-0460">Magnesium</keyword>
<keyword id="KW-0479">Metal-binding</keyword>
<keyword id="KW-0547">Nucleotide-binding</keyword>
<keyword id="KW-0597">Phosphoprotein</keyword>
<keyword id="KW-1185">Reference proteome</keyword>
<keyword id="KW-0832">Ubl conjugation</keyword>
<dbReference type="EC" id="3.6.1.-" evidence="1"/>
<dbReference type="EMBL" id="AF068483">
    <property type="protein sequence ID" value="AAC19379.1"/>
    <property type="molecule type" value="mRNA"/>
</dbReference>
<dbReference type="RefSeq" id="NP_001075508.1">
    <property type="nucleotide sequence ID" value="NM_001082039.1"/>
</dbReference>
<dbReference type="SMR" id="O77622"/>
<dbReference type="FunCoup" id="O77622">
    <property type="interactions" value="1832"/>
</dbReference>
<dbReference type="IntAct" id="O77622">
    <property type="interactions" value="1"/>
</dbReference>
<dbReference type="STRING" id="9986.ENSOCUP00000015180"/>
<dbReference type="PaxDb" id="9986-ENSOCUP00000015180"/>
<dbReference type="Ensembl" id="ENSOCUT00000017675.3">
    <property type="protein sequence ID" value="ENSOCUP00000015180.2"/>
    <property type="gene ID" value="ENSOCUG00000017674.3"/>
</dbReference>
<dbReference type="GeneID" id="100008688"/>
<dbReference type="KEGG" id="ocu:100008688"/>
<dbReference type="CTD" id="908"/>
<dbReference type="eggNOG" id="KOG0359">
    <property type="taxonomic scope" value="Eukaryota"/>
</dbReference>
<dbReference type="GeneTree" id="ENSGT00940000154631"/>
<dbReference type="HOGENOM" id="CLU_008891_3_1_1"/>
<dbReference type="InParanoid" id="O77622"/>
<dbReference type="OMA" id="LHPRIMT"/>
<dbReference type="OrthoDB" id="10052040at2759"/>
<dbReference type="TreeFam" id="TF106333"/>
<dbReference type="Proteomes" id="UP000001811">
    <property type="component" value="Unplaced"/>
</dbReference>
<dbReference type="Bgee" id="ENSOCUG00000017674">
    <property type="expression patterns" value="Expressed in embryo and 15 other cell types or tissues"/>
</dbReference>
<dbReference type="GO" id="GO:0005832">
    <property type="term" value="C:chaperonin-containing T-complex"/>
    <property type="evidence" value="ECO:0000250"/>
    <property type="project" value="UniProtKB"/>
</dbReference>
<dbReference type="GO" id="GO:0005829">
    <property type="term" value="C:cytosol"/>
    <property type="evidence" value="ECO:0000304"/>
    <property type="project" value="Reactome"/>
</dbReference>
<dbReference type="GO" id="GO:0005874">
    <property type="term" value="C:microtubule"/>
    <property type="evidence" value="ECO:0007669"/>
    <property type="project" value="Ensembl"/>
</dbReference>
<dbReference type="GO" id="GO:0005524">
    <property type="term" value="F:ATP binding"/>
    <property type="evidence" value="ECO:0007669"/>
    <property type="project" value="UniProtKB-KW"/>
</dbReference>
<dbReference type="GO" id="GO:0016887">
    <property type="term" value="F:ATP hydrolysis activity"/>
    <property type="evidence" value="ECO:0007669"/>
    <property type="project" value="InterPro"/>
</dbReference>
<dbReference type="GO" id="GO:0140662">
    <property type="term" value="F:ATP-dependent protein folding chaperone"/>
    <property type="evidence" value="ECO:0007669"/>
    <property type="project" value="InterPro"/>
</dbReference>
<dbReference type="GO" id="GO:0051082">
    <property type="term" value="F:unfolded protein binding"/>
    <property type="evidence" value="ECO:0007669"/>
    <property type="project" value="InterPro"/>
</dbReference>
<dbReference type="GO" id="GO:0071987">
    <property type="term" value="F:WD40-repeat domain binding"/>
    <property type="evidence" value="ECO:0007669"/>
    <property type="project" value="Ensembl"/>
</dbReference>
<dbReference type="GO" id="GO:0051086">
    <property type="term" value="P:chaperone mediated protein folding independent of cofactor"/>
    <property type="evidence" value="ECO:0007669"/>
    <property type="project" value="Ensembl"/>
</dbReference>
<dbReference type="GO" id="GO:1904851">
    <property type="term" value="P:positive regulation of establishment of protein localization to telomere"/>
    <property type="evidence" value="ECO:0007669"/>
    <property type="project" value="Ensembl"/>
</dbReference>
<dbReference type="GO" id="GO:0032212">
    <property type="term" value="P:positive regulation of telomere maintenance via telomerase"/>
    <property type="evidence" value="ECO:0007669"/>
    <property type="project" value="Ensembl"/>
</dbReference>
<dbReference type="GO" id="GO:0050821">
    <property type="term" value="P:protein stabilization"/>
    <property type="evidence" value="ECO:0007669"/>
    <property type="project" value="Ensembl"/>
</dbReference>
<dbReference type="CDD" id="cd03342">
    <property type="entry name" value="TCP1_zeta"/>
    <property type="match status" value="1"/>
</dbReference>
<dbReference type="FunFam" id="1.10.560.10:FF:000038">
    <property type="entry name" value="Chaperonin containing TCP1 subunit 6B"/>
    <property type="match status" value="1"/>
</dbReference>
<dbReference type="FunFam" id="3.30.260.10:FF:000029">
    <property type="entry name" value="Chaperonin containing TCP1 subunit 6B"/>
    <property type="match status" value="1"/>
</dbReference>
<dbReference type="FunFam" id="1.10.560.10:FF:000022">
    <property type="entry name" value="T-complex protein 1 subunit zeta"/>
    <property type="match status" value="1"/>
</dbReference>
<dbReference type="FunFam" id="3.30.260.10:FF:000017">
    <property type="entry name" value="T-complex protein 1 subunit zeta"/>
    <property type="match status" value="1"/>
</dbReference>
<dbReference type="FunFam" id="3.50.7.10:FF:000004">
    <property type="entry name" value="T-complex protein 1 subunit zeta"/>
    <property type="match status" value="1"/>
</dbReference>
<dbReference type="Gene3D" id="3.50.7.10">
    <property type="entry name" value="GroEL"/>
    <property type="match status" value="1"/>
</dbReference>
<dbReference type="Gene3D" id="1.10.560.10">
    <property type="entry name" value="GroEL-like equatorial domain"/>
    <property type="match status" value="1"/>
</dbReference>
<dbReference type="Gene3D" id="3.30.260.10">
    <property type="entry name" value="TCP-1-like chaperonin intermediate domain"/>
    <property type="match status" value="1"/>
</dbReference>
<dbReference type="InterPro" id="IPR012722">
    <property type="entry name" value="Chap_CCT_zeta"/>
</dbReference>
<dbReference type="InterPro" id="IPR017998">
    <property type="entry name" value="Chaperone_TCP-1"/>
</dbReference>
<dbReference type="InterPro" id="IPR002194">
    <property type="entry name" value="Chaperonin_TCP-1_CS"/>
</dbReference>
<dbReference type="InterPro" id="IPR002423">
    <property type="entry name" value="Cpn60/GroEL/TCP-1"/>
</dbReference>
<dbReference type="InterPro" id="IPR027409">
    <property type="entry name" value="GroEL-like_apical_dom_sf"/>
</dbReference>
<dbReference type="InterPro" id="IPR027413">
    <property type="entry name" value="GROEL-like_equatorial_sf"/>
</dbReference>
<dbReference type="InterPro" id="IPR027410">
    <property type="entry name" value="TCP-1-like_intermed_sf"/>
</dbReference>
<dbReference type="InterPro" id="IPR053374">
    <property type="entry name" value="TCP-1_chaperonin"/>
</dbReference>
<dbReference type="NCBIfam" id="TIGR02347">
    <property type="entry name" value="chap_CCT_zeta"/>
    <property type="match status" value="1"/>
</dbReference>
<dbReference type="NCBIfam" id="NF041083">
    <property type="entry name" value="thermosome_beta"/>
    <property type="match status" value="1"/>
</dbReference>
<dbReference type="PANTHER" id="PTHR11353">
    <property type="entry name" value="CHAPERONIN"/>
    <property type="match status" value="1"/>
</dbReference>
<dbReference type="Pfam" id="PF00118">
    <property type="entry name" value="Cpn60_TCP1"/>
    <property type="match status" value="1"/>
</dbReference>
<dbReference type="PRINTS" id="PR00304">
    <property type="entry name" value="TCOMPLEXTCP1"/>
</dbReference>
<dbReference type="SUPFAM" id="SSF52029">
    <property type="entry name" value="GroEL apical domain-like"/>
    <property type="match status" value="1"/>
</dbReference>
<dbReference type="SUPFAM" id="SSF48592">
    <property type="entry name" value="GroEL equatorial domain-like"/>
    <property type="match status" value="1"/>
</dbReference>
<dbReference type="SUPFAM" id="SSF54849">
    <property type="entry name" value="GroEL-intermediate domain like"/>
    <property type="match status" value="1"/>
</dbReference>
<dbReference type="PROSITE" id="PS00750">
    <property type="entry name" value="TCP1_1"/>
    <property type="match status" value="1"/>
</dbReference>
<dbReference type="PROSITE" id="PS00751">
    <property type="entry name" value="TCP1_2"/>
    <property type="match status" value="1"/>
</dbReference>
<dbReference type="PROSITE" id="PS00995">
    <property type="entry name" value="TCP1_3"/>
    <property type="match status" value="1"/>
</dbReference>